<sequence>MSDMHSLLIAAILGVVEGLTEFLPVSSTGHMIIVGHLLGFEGDTAKTFEVVIQLGSILAVVVMFWRRLFGLIGIHFGRPLQREGESKGRLTLIHILLGMIPAVVLGLVFHDTIKSLFNPINVMYALVVGGLLLIAAECLKPKEPRAPGLDDMTYRQAFMIGCFQCLALWPGFSRSGATISGGMLMGVSRYAASEFSFLLAVPMMMGATVLDLYKSWSFLTAADIPMFAVGFVTAFVVALIAIKTFLQLIKRISFIPFAIYRFVVAAAVYVVFF</sequence>
<dbReference type="EC" id="3.6.1.27" evidence="1"/>
<dbReference type="EMBL" id="CP001113">
    <property type="protein sequence ID" value="ACF61363.1"/>
    <property type="molecule type" value="Genomic_DNA"/>
</dbReference>
<dbReference type="SMR" id="B4T675"/>
<dbReference type="KEGG" id="see:SNSL254_A3465"/>
<dbReference type="HOGENOM" id="CLU_060296_2_0_6"/>
<dbReference type="Proteomes" id="UP000008824">
    <property type="component" value="Chromosome"/>
</dbReference>
<dbReference type="GO" id="GO:0005886">
    <property type="term" value="C:plasma membrane"/>
    <property type="evidence" value="ECO:0007669"/>
    <property type="project" value="UniProtKB-SubCell"/>
</dbReference>
<dbReference type="GO" id="GO:0050380">
    <property type="term" value="F:undecaprenyl-diphosphatase activity"/>
    <property type="evidence" value="ECO:0007669"/>
    <property type="project" value="UniProtKB-UniRule"/>
</dbReference>
<dbReference type="GO" id="GO:0071555">
    <property type="term" value="P:cell wall organization"/>
    <property type="evidence" value="ECO:0007669"/>
    <property type="project" value="UniProtKB-KW"/>
</dbReference>
<dbReference type="GO" id="GO:0009252">
    <property type="term" value="P:peptidoglycan biosynthetic process"/>
    <property type="evidence" value="ECO:0007669"/>
    <property type="project" value="UniProtKB-KW"/>
</dbReference>
<dbReference type="GO" id="GO:0008360">
    <property type="term" value="P:regulation of cell shape"/>
    <property type="evidence" value="ECO:0007669"/>
    <property type="project" value="UniProtKB-KW"/>
</dbReference>
<dbReference type="GO" id="GO:0046677">
    <property type="term" value="P:response to antibiotic"/>
    <property type="evidence" value="ECO:0007669"/>
    <property type="project" value="UniProtKB-UniRule"/>
</dbReference>
<dbReference type="HAMAP" id="MF_01006">
    <property type="entry name" value="Undec_diphosphatase"/>
    <property type="match status" value="1"/>
</dbReference>
<dbReference type="InterPro" id="IPR003824">
    <property type="entry name" value="UppP"/>
</dbReference>
<dbReference type="NCBIfam" id="NF001388">
    <property type="entry name" value="PRK00281.1-1"/>
    <property type="match status" value="1"/>
</dbReference>
<dbReference type="NCBIfam" id="NF001389">
    <property type="entry name" value="PRK00281.1-2"/>
    <property type="match status" value="1"/>
</dbReference>
<dbReference type="NCBIfam" id="NF001390">
    <property type="entry name" value="PRK00281.1-4"/>
    <property type="match status" value="1"/>
</dbReference>
<dbReference type="NCBIfam" id="TIGR00753">
    <property type="entry name" value="undec_PP_bacA"/>
    <property type="match status" value="1"/>
</dbReference>
<dbReference type="PANTHER" id="PTHR30622">
    <property type="entry name" value="UNDECAPRENYL-DIPHOSPHATASE"/>
    <property type="match status" value="1"/>
</dbReference>
<dbReference type="PANTHER" id="PTHR30622:SF3">
    <property type="entry name" value="UNDECAPRENYL-DIPHOSPHATASE"/>
    <property type="match status" value="1"/>
</dbReference>
<dbReference type="Pfam" id="PF02673">
    <property type="entry name" value="BacA"/>
    <property type="match status" value="1"/>
</dbReference>
<name>UPPP_SALNS</name>
<keyword id="KW-0046">Antibiotic resistance</keyword>
<keyword id="KW-0997">Cell inner membrane</keyword>
<keyword id="KW-1003">Cell membrane</keyword>
<keyword id="KW-0133">Cell shape</keyword>
<keyword id="KW-0961">Cell wall biogenesis/degradation</keyword>
<keyword id="KW-0378">Hydrolase</keyword>
<keyword id="KW-0472">Membrane</keyword>
<keyword id="KW-0573">Peptidoglycan synthesis</keyword>
<keyword id="KW-0812">Transmembrane</keyword>
<keyword id="KW-1133">Transmembrane helix</keyword>
<gene>
    <name evidence="1" type="primary">uppP</name>
    <name type="ordered locus">SNSL254_A3465</name>
</gene>
<proteinExistence type="inferred from homology"/>
<accession>B4T675</accession>
<protein>
    <recommendedName>
        <fullName evidence="1">Undecaprenyl-diphosphatase</fullName>
        <ecNumber evidence="1">3.6.1.27</ecNumber>
    </recommendedName>
    <alternativeName>
        <fullName evidence="1">Bacitracin resistance protein</fullName>
    </alternativeName>
    <alternativeName>
        <fullName evidence="1">Undecaprenyl pyrophosphate phosphatase</fullName>
    </alternativeName>
</protein>
<organism>
    <name type="scientific">Salmonella newport (strain SL254)</name>
    <dbReference type="NCBI Taxonomy" id="423368"/>
    <lineage>
        <taxon>Bacteria</taxon>
        <taxon>Pseudomonadati</taxon>
        <taxon>Pseudomonadota</taxon>
        <taxon>Gammaproteobacteria</taxon>
        <taxon>Enterobacterales</taxon>
        <taxon>Enterobacteriaceae</taxon>
        <taxon>Salmonella</taxon>
    </lineage>
</organism>
<reference key="1">
    <citation type="journal article" date="2011" name="J. Bacteriol.">
        <title>Comparative genomics of 28 Salmonella enterica isolates: evidence for CRISPR-mediated adaptive sublineage evolution.</title>
        <authorList>
            <person name="Fricke W.F."/>
            <person name="Mammel M.K."/>
            <person name="McDermott P.F."/>
            <person name="Tartera C."/>
            <person name="White D.G."/>
            <person name="Leclerc J.E."/>
            <person name="Ravel J."/>
            <person name="Cebula T.A."/>
        </authorList>
    </citation>
    <scope>NUCLEOTIDE SEQUENCE [LARGE SCALE GENOMIC DNA]</scope>
    <source>
        <strain>SL254</strain>
    </source>
</reference>
<feature type="chain" id="PRO_1000197401" description="Undecaprenyl-diphosphatase">
    <location>
        <begin position="1"/>
        <end position="273"/>
    </location>
</feature>
<feature type="transmembrane region" description="Helical" evidence="1">
    <location>
        <begin position="6"/>
        <end position="26"/>
    </location>
</feature>
<feature type="transmembrane region" description="Helical" evidence="1">
    <location>
        <begin position="45"/>
        <end position="65"/>
    </location>
</feature>
<feature type="transmembrane region" description="Helical" evidence="1">
    <location>
        <begin position="90"/>
        <end position="110"/>
    </location>
</feature>
<feature type="transmembrane region" description="Helical" evidence="1">
    <location>
        <begin position="116"/>
        <end position="136"/>
    </location>
</feature>
<feature type="transmembrane region" description="Helical" evidence="1">
    <location>
        <begin position="190"/>
        <end position="210"/>
    </location>
</feature>
<feature type="transmembrane region" description="Helical" evidence="1">
    <location>
        <begin position="222"/>
        <end position="242"/>
    </location>
</feature>
<feature type="transmembrane region" description="Helical" evidence="1">
    <location>
        <begin position="252"/>
        <end position="272"/>
    </location>
</feature>
<comment type="function">
    <text evidence="1">Catalyzes the dephosphorylation of undecaprenyl diphosphate (UPP). Confers resistance to bacitracin.</text>
</comment>
<comment type="catalytic activity">
    <reaction evidence="1">
        <text>di-trans,octa-cis-undecaprenyl diphosphate + H2O = di-trans,octa-cis-undecaprenyl phosphate + phosphate + H(+)</text>
        <dbReference type="Rhea" id="RHEA:28094"/>
        <dbReference type="ChEBI" id="CHEBI:15377"/>
        <dbReference type="ChEBI" id="CHEBI:15378"/>
        <dbReference type="ChEBI" id="CHEBI:43474"/>
        <dbReference type="ChEBI" id="CHEBI:58405"/>
        <dbReference type="ChEBI" id="CHEBI:60392"/>
        <dbReference type="EC" id="3.6.1.27"/>
    </reaction>
</comment>
<comment type="subcellular location">
    <subcellularLocation>
        <location evidence="1">Cell inner membrane</location>
        <topology evidence="1">Multi-pass membrane protein</topology>
    </subcellularLocation>
</comment>
<comment type="miscellaneous">
    <text>Bacitracin is thought to be involved in the inhibition of peptidoglycan synthesis by sequestering undecaprenyl diphosphate, thereby reducing the pool of lipid carrier available.</text>
</comment>
<comment type="similarity">
    <text evidence="1">Belongs to the UppP family.</text>
</comment>
<evidence type="ECO:0000255" key="1">
    <source>
        <dbReference type="HAMAP-Rule" id="MF_01006"/>
    </source>
</evidence>